<sequence>MSKEKFARTKPHCNVGTIGHVDHGKTSLTAAITKVLAEAGGATFQAYDQIDKAPEERARGITISTAHVEYETEARHYAHVDCPGHADYVKNMITGAAQMDGAILVVSAADGPMPQTREHILLARQVGVPALVVFLNKCDMVDDEELLELVELEVRELLTSYDFPGDDIPIVKGSALAALEDSDPKLGHDAILELMKAVDDYIPQPERPKDKPFLMPIEDVFSISGRGTVVTGRVERGIVKVGEEIEIIGIRDTQKTTCTGVEMFRKLLDQGEAGDNIGALLRGTKRDDVERGQVLAKPGSITPHTKFKCEAYILTKEEGGRHTPFFSNYRPQFYFRTTDVTGTIELPEGTEMVMPGDNIGMTVQLIAPIAMDEGLRFAIREGGRTVGAGVVASIVQ</sequence>
<dbReference type="EC" id="3.6.5.3" evidence="2"/>
<dbReference type="EMBL" id="CP000230">
    <property type="protein sequence ID" value="ABC23487.1"/>
    <property type="molecule type" value="Genomic_DNA"/>
</dbReference>
<dbReference type="RefSeq" id="YP_427774.1">
    <property type="nucleotide sequence ID" value="NC_007643.1"/>
</dbReference>
<dbReference type="SMR" id="Q2RQV8"/>
<dbReference type="STRING" id="269796.Rru_A2690"/>
<dbReference type="EnsemblBacteria" id="ABC23487">
    <property type="protein sequence ID" value="ABC23487"/>
    <property type="gene ID" value="Rru_A2690"/>
</dbReference>
<dbReference type="KEGG" id="rru:Rru_A2690"/>
<dbReference type="PATRIC" id="fig|269796.9.peg.2797"/>
<dbReference type="eggNOG" id="COG0050">
    <property type="taxonomic scope" value="Bacteria"/>
</dbReference>
<dbReference type="HOGENOM" id="CLU_007265_0_0_5"/>
<dbReference type="PhylomeDB" id="Q2RQV8"/>
<dbReference type="Proteomes" id="UP000001929">
    <property type="component" value="Chromosome"/>
</dbReference>
<dbReference type="GO" id="GO:0005829">
    <property type="term" value="C:cytosol"/>
    <property type="evidence" value="ECO:0007669"/>
    <property type="project" value="TreeGrafter"/>
</dbReference>
<dbReference type="GO" id="GO:0005525">
    <property type="term" value="F:GTP binding"/>
    <property type="evidence" value="ECO:0007669"/>
    <property type="project" value="UniProtKB-UniRule"/>
</dbReference>
<dbReference type="GO" id="GO:0003924">
    <property type="term" value="F:GTPase activity"/>
    <property type="evidence" value="ECO:0007669"/>
    <property type="project" value="InterPro"/>
</dbReference>
<dbReference type="GO" id="GO:0097216">
    <property type="term" value="F:guanosine tetraphosphate binding"/>
    <property type="evidence" value="ECO:0007669"/>
    <property type="project" value="UniProtKB-ARBA"/>
</dbReference>
<dbReference type="GO" id="GO:0003746">
    <property type="term" value="F:translation elongation factor activity"/>
    <property type="evidence" value="ECO:0007669"/>
    <property type="project" value="UniProtKB-UniRule"/>
</dbReference>
<dbReference type="CDD" id="cd01884">
    <property type="entry name" value="EF_Tu"/>
    <property type="match status" value="1"/>
</dbReference>
<dbReference type="CDD" id="cd03697">
    <property type="entry name" value="EFTU_II"/>
    <property type="match status" value="1"/>
</dbReference>
<dbReference type="CDD" id="cd03707">
    <property type="entry name" value="EFTU_III"/>
    <property type="match status" value="1"/>
</dbReference>
<dbReference type="FunFam" id="2.40.30.10:FF:000001">
    <property type="entry name" value="Elongation factor Tu"/>
    <property type="match status" value="1"/>
</dbReference>
<dbReference type="FunFam" id="3.40.50.300:FF:000003">
    <property type="entry name" value="Elongation factor Tu"/>
    <property type="match status" value="1"/>
</dbReference>
<dbReference type="Gene3D" id="3.40.50.300">
    <property type="entry name" value="P-loop containing nucleotide triphosphate hydrolases"/>
    <property type="match status" value="1"/>
</dbReference>
<dbReference type="Gene3D" id="2.40.30.10">
    <property type="entry name" value="Translation factors"/>
    <property type="match status" value="2"/>
</dbReference>
<dbReference type="HAMAP" id="MF_00118_B">
    <property type="entry name" value="EF_Tu_B"/>
    <property type="match status" value="1"/>
</dbReference>
<dbReference type="InterPro" id="IPR041709">
    <property type="entry name" value="EF-Tu_GTP-bd"/>
</dbReference>
<dbReference type="InterPro" id="IPR050055">
    <property type="entry name" value="EF-Tu_GTPase"/>
</dbReference>
<dbReference type="InterPro" id="IPR004161">
    <property type="entry name" value="EFTu-like_2"/>
</dbReference>
<dbReference type="InterPro" id="IPR033720">
    <property type="entry name" value="EFTU_2"/>
</dbReference>
<dbReference type="InterPro" id="IPR031157">
    <property type="entry name" value="G_TR_CS"/>
</dbReference>
<dbReference type="InterPro" id="IPR027417">
    <property type="entry name" value="P-loop_NTPase"/>
</dbReference>
<dbReference type="InterPro" id="IPR005225">
    <property type="entry name" value="Small_GTP-bd"/>
</dbReference>
<dbReference type="InterPro" id="IPR000795">
    <property type="entry name" value="T_Tr_GTP-bd_dom"/>
</dbReference>
<dbReference type="InterPro" id="IPR009000">
    <property type="entry name" value="Transl_B-barrel_sf"/>
</dbReference>
<dbReference type="InterPro" id="IPR009001">
    <property type="entry name" value="Transl_elong_EF1A/Init_IF2_C"/>
</dbReference>
<dbReference type="InterPro" id="IPR004541">
    <property type="entry name" value="Transl_elong_EFTu/EF1A_bac/org"/>
</dbReference>
<dbReference type="InterPro" id="IPR004160">
    <property type="entry name" value="Transl_elong_EFTu/EF1A_C"/>
</dbReference>
<dbReference type="NCBIfam" id="TIGR00485">
    <property type="entry name" value="EF-Tu"/>
    <property type="match status" value="1"/>
</dbReference>
<dbReference type="NCBIfam" id="NF000766">
    <property type="entry name" value="PRK00049.1"/>
    <property type="match status" value="1"/>
</dbReference>
<dbReference type="NCBIfam" id="NF009372">
    <property type="entry name" value="PRK12735.1"/>
    <property type="match status" value="1"/>
</dbReference>
<dbReference type="NCBIfam" id="NF009373">
    <property type="entry name" value="PRK12736.1"/>
    <property type="match status" value="1"/>
</dbReference>
<dbReference type="NCBIfam" id="TIGR00231">
    <property type="entry name" value="small_GTP"/>
    <property type="match status" value="1"/>
</dbReference>
<dbReference type="PANTHER" id="PTHR43721:SF22">
    <property type="entry name" value="ELONGATION FACTOR TU, MITOCHONDRIAL"/>
    <property type="match status" value="1"/>
</dbReference>
<dbReference type="PANTHER" id="PTHR43721">
    <property type="entry name" value="ELONGATION FACTOR TU-RELATED"/>
    <property type="match status" value="1"/>
</dbReference>
<dbReference type="Pfam" id="PF00009">
    <property type="entry name" value="GTP_EFTU"/>
    <property type="match status" value="1"/>
</dbReference>
<dbReference type="Pfam" id="PF03144">
    <property type="entry name" value="GTP_EFTU_D2"/>
    <property type="match status" value="1"/>
</dbReference>
<dbReference type="Pfam" id="PF03143">
    <property type="entry name" value="GTP_EFTU_D3"/>
    <property type="match status" value="1"/>
</dbReference>
<dbReference type="PRINTS" id="PR00315">
    <property type="entry name" value="ELONGATNFCT"/>
</dbReference>
<dbReference type="SUPFAM" id="SSF50465">
    <property type="entry name" value="EF-Tu/eEF-1alpha/eIF2-gamma C-terminal domain"/>
    <property type="match status" value="1"/>
</dbReference>
<dbReference type="SUPFAM" id="SSF52540">
    <property type="entry name" value="P-loop containing nucleoside triphosphate hydrolases"/>
    <property type="match status" value="1"/>
</dbReference>
<dbReference type="SUPFAM" id="SSF50447">
    <property type="entry name" value="Translation proteins"/>
    <property type="match status" value="1"/>
</dbReference>
<dbReference type="PROSITE" id="PS00301">
    <property type="entry name" value="G_TR_1"/>
    <property type="match status" value="1"/>
</dbReference>
<dbReference type="PROSITE" id="PS51722">
    <property type="entry name" value="G_TR_2"/>
    <property type="match status" value="1"/>
</dbReference>
<accession>Q2RQV8</accession>
<organism>
    <name type="scientific">Rhodospirillum rubrum (strain ATCC 11170 / ATH 1.1.1 / DSM 467 / LMG 4362 / NCIMB 8255 / S1)</name>
    <dbReference type="NCBI Taxonomy" id="269796"/>
    <lineage>
        <taxon>Bacteria</taxon>
        <taxon>Pseudomonadati</taxon>
        <taxon>Pseudomonadota</taxon>
        <taxon>Alphaproteobacteria</taxon>
        <taxon>Rhodospirillales</taxon>
        <taxon>Rhodospirillaceae</taxon>
        <taxon>Rhodospirillum</taxon>
    </lineage>
</organism>
<reference key="1">
    <citation type="journal article" date="2011" name="Stand. Genomic Sci.">
        <title>Complete genome sequence of Rhodospirillum rubrum type strain (S1).</title>
        <authorList>
            <person name="Munk A.C."/>
            <person name="Copeland A."/>
            <person name="Lucas S."/>
            <person name="Lapidus A."/>
            <person name="Del Rio T.G."/>
            <person name="Barry K."/>
            <person name="Detter J.C."/>
            <person name="Hammon N."/>
            <person name="Israni S."/>
            <person name="Pitluck S."/>
            <person name="Brettin T."/>
            <person name="Bruce D."/>
            <person name="Han C."/>
            <person name="Tapia R."/>
            <person name="Gilna P."/>
            <person name="Schmutz J."/>
            <person name="Larimer F."/>
            <person name="Land M."/>
            <person name="Kyrpides N.C."/>
            <person name="Mavromatis K."/>
            <person name="Richardson P."/>
            <person name="Rohde M."/>
            <person name="Goeker M."/>
            <person name="Klenk H.P."/>
            <person name="Zhang Y."/>
            <person name="Roberts G.P."/>
            <person name="Reslewic S."/>
            <person name="Schwartz D.C."/>
        </authorList>
    </citation>
    <scope>NUCLEOTIDE SEQUENCE [LARGE SCALE GENOMIC DNA]</scope>
    <source>
        <strain>ATCC 11170 / ATH 1.1.1 / DSM 467 / LMG 4362 / NCIMB 8255 / S1</strain>
    </source>
</reference>
<proteinExistence type="inferred from homology"/>
<name>EFTU1_RHORT</name>
<gene>
    <name evidence="2" type="primary">tuf1</name>
    <name type="ordered locus">Rru_A2690</name>
</gene>
<comment type="function">
    <text evidence="2">GTP hydrolase that promotes the GTP-dependent binding of aminoacyl-tRNA to the A-site of ribosomes during protein biosynthesis.</text>
</comment>
<comment type="catalytic activity">
    <reaction evidence="2">
        <text>GTP + H2O = GDP + phosphate + H(+)</text>
        <dbReference type="Rhea" id="RHEA:19669"/>
        <dbReference type="ChEBI" id="CHEBI:15377"/>
        <dbReference type="ChEBI" id="CHEBI:15378"/>
        <dbReference type="ChEBI" id="CHEBI:37565"/>
        <dbReference type="ChEBI" id="CHEBI:43474"/>
        <dbReference type="ChEBI" id="CHEBI:58189"/>
        <dbReference type="EC" id="3.6.5.3"/>
    </reaction>
    <physiologicalReaction direction="left-to-right" evidence="2">
        <dbReference type="Rhea" id="RHEA:19670"/>
    </physiologicalReaction>
</comment>
<comment type="subunit">
    <text evidence="2">Monomer.</text>
</comment>
<comment type="subcellular location">
    <subcellularLocation>
        <location evidence="2">Cytoplasm</location>
    </subcellularLocation>
</comment>
<comment type="similarity">
    <text evidence="2">Belongs to the TRAFAC class translation factor GTPase superfamily. Classic translation factor GTPase family. EF-Tu/EF-1A subfamily.</text>
</comment>
<protein>
    <recommendedName>
        <fullName evidence="2">Elongation factor Tu 1</fullName>
        <shortName evidence="2">EF-Tu 1</shortName>
        <ecNumber evidence="2">3.6.5.3</ecNumber>
    </recommendedName>
</protein>
<evidence type="ECO:0000250" key="1"/>
<evidence type="ECO:0000255" key="2">
    <source>
        <dbReference type="HAMAP-Rule" id="MF_00118"/>
    </source>
</evidence>
<keyword id="KW-0963">Cytoplasm</keyword>
<keyword id="KW-0251">Elongation factor</keyword>
<keyword id="KW-0342">GTP-binding</keyword>
<keyword id="KW-0378">Hydrolase</keyword>
<keyword id="KW-0460">Magnesium</keyword>
<keyword id="KW-0479">Metal-binding</keyword>
<keyword id="KW-0547">Nucleotide-binding</keyword>
<keyword id="KW-0648">Protein biosynthesis</keyword>
<keyword id="KW-1185">Reference proteome</keyword>
<feature type="chain" id="PRO_0000337499" description="Elongation factor Tu 1">
    <location>
        <begin position="1"/>
        <end position="396"/>
    </location>
</feature>
<feature type="domain" description="tr-type G">
    <location>
        <begin position="10"/>
        <end position="206"/>
    </location>
</feature>
<feature type="region of interest" description="G1" evidence="1">
    <location>
        <begin position="19"/>
        <end position="26"/>
    </location>
</feature>
<feature type="region of interest" description="G2" evidence="1">
    <location>
        <begin position="60"/>
        <end position="64"/>
    </location>
</feature>
<feature type="region of interest" description="G3" evidence="1">
    <location>
        <begin position="81"/>
        <end position="84"/>
    </location>
</feature>
<feature type="region of interest" description="G4" evidence="1">
    <location>
        <begin position="136"/>
        <end position="139"/>
    </location>
</feature>
<feature type="region of interest" description="G5" evidence="1">
    <location>
        <begin position="174"/>
        <end position="176"/>
    </location>
</feature>
<feature type="binding site" evidence="2">
    <location>
        <begin position="19"/>
        <end position="26"/>
    </location>
    <ligand>
        <name>GTP</name>
        <dbReference type="ChEBI" id="CHEBI:37565"/>
    </ligand>
</feature>
<feature type="binding site" evidence="2">
    <location>
        <position position="26"/>
    </location>
    <ligand>
        <name>Mg(2+)</name>
        <dbReference type="ChEBI" id="CHEBI:18420"/>
    </ligand>
</feature>
<feature type="binding site" evidence="2">
    <location>
        <begin position="81"/>
        <end position="85"/>
    </location>
    <ligand>
        <name>GTP</name>
        <dbReference type="ChEBI" id="CHEBI:37565"/>
    </ligand>
</feature>
<feature type="binding site" evidence="2">
    <location>
        <begin position="136"/>
        <end position="139"/>
    </location>
    <ligand>
        <name>GTP</name>
        <dbReference type="ChEBI" id="CHEBI:37565"/>
    </ligand>
</feature>